<comment type="function">
    <text evidence="1">Catalyzes the transfer of an acyl group from acyl-ACP to glycerol-3-phosphate (G3P) to form lysophosphatidic acid (LPA). This enzyme can also utilize acyl-CoA as fatty acyl donor, but not acyl-PO(4).</text>
</comment>
<comment type="catalytic activity">
    <reaction evidence="1">
        <text>sn-glycerol 3-phosphate + an acyl-CoA = a 1-acyl-sn-glycero-3-phosphate + CoA</text>
        <dbReference type="Rhea" id="RHEA:15325"/>
        <dbReference type="ChEBI" id="CHEBI:57287"/>
        <dbReference type="ChEBI" id="CHEBI:57597"/>
        <dbReference type="ChEBI" id="CHEBI:57970"/>
        <dbReference type="ChEBI" id="CHEBI:58342"/>
        <dbReference type="EC" id="2.3.1.15"/>
    </reaction>
</comment>
<comment type="catalytic activity">
    <reaction evidence="1">
        <text>a fatty acyl-[ACP] + sn-glycerol 3-phosphate = a 1-acyl-sn-glycero-3-phosphate + holo-[ACP]</text>
        <dbReference type="Rhea" id="RHEA:42300"/>
        <dbReference type="Rhea" id="RHEA-COMP:9685"/>
        <dbReference type="Rhea" id="RHEA-COMP:14125"/>
        <dbReference type="ChEBI" id="CHEBI:57597"/>
        <dbReference type="ChEBI" id="CHEBI:57970"/>
        <dbReference type="ChEBI" id="CHEBI:64479"/>
        <dbReference type="ChEBI" id="CHEBI:138651"/>
        <dbReference type="EC" id="2.3.1.n5"/>
    </reaction>
</comment>
<comment type="pathway">
    <text evidence="1">Lipid metabolism; phospholipid metabolism.</text>
</comment>
<comment type="subunit">
    <text evidence="1">Probably interacts with PlsX.</text>
</comment>
<comment type="subcellular location">
    <subcellularLocation>
        <location evidence="1">Cell inner membrane</location>
        <topology evidence="1">Multi-pass membrane protein</topology>
    </subcellularLocation>
</comment>
<comment type="similarity">
    <text evidence="1">Belongs to the PlsY family.</text>
</comment>
<protein>
    <recommendedName>
        <fullName evidence="1">Glycerol-3-phosphate acyltransferase</fullName>
    </recommendedName>
    <alternativeName>
        <fullName evidence="1">G3P acyltransferase</fullName>
        <shortName evidence="1">GPAT</shortName>
        <ecNumber evidence="1">2.3.1.15</ecNumber>
        <ecNumber evidence="1">2.3.1.n5</ecNumber>
    </alternativeName>
    <alternativeName>
        <fullName evidence="1">Lysophosphatidic acid synthase</fullName>
        <shortName evidence="1">LPA synthase</shortName>
    </alternativeName>
</protein>
<organism>
    <name type="scientific">Escherichia coli O45:K1 (strain S88 / ExPEC)</name>
    <dbReference type="NCBI Taxonomy" id="585035"/>
    <lineage>
        <taxon>Bacteria</taxon>
        <taxon>Pseudomonadati</taxon>
        <taxon>Pseudomonadota</taxon>
        <taxon>Gammaproteobacteria</taxon>
        <taxon>Enterobacterales</taxon>
        <taxon>Enterobacteriaceae</taxon>
        <taxon>Escherichia</taxon>
    </lineage>
</organism>
<proteinExistence type="inferred from homology"/>
<reference key="1">
    <citation type="journal article" date="2009" name="PLoS Genet.">
        <title>Organised genome dynamics in the Escherichia coli species results in highly diverse adaptive paths.</title>
        <authorList>
            <person name="Touchon M."/>
            <person name="Hoede C."/>
            <person name="Tenaillon O."/>
            <person name="Barbe V."/>
            <person name="Baeriswyl S."/>
            <person name="Bidet P."/>
            <person name="Bingen E."/>
            <person name="Bonacorsi S."/>
            <person name="Bouchier C."/>
            <person name="Bouvet O."/>
            <person name="Calteau A."/>
            <person name="Chiapello H."/>
            <person name="Clermont O."/>
            <person name="Cruveiller S."/>
            <person name="Danchin A."/>
            <person name="Diard M."/>
            <person name="Dossat C."/>
            <person name="Karoui M.E."/>
            <person name="Frapy E."/>
            <person name="Garry L."/>
            <person name="Ghigo J.M."/>
            <person name="Gilles A.M."/>
            <person name="Johnson J."/>
            <person name="Le Bouguenec C."/>
            <person name="Lescat M."/>
            <person name="Mangenot S."/>
            <person name="Martinez-Jehanne V."/>
            <person name="Matic I."/>
            <person name="Nassif X."/>
            <person name="Oztas S."/>
            <person name="Petit M.A."/>
            <person name="Pichon C."/>
            <person name="Rouy Z."/>
            <person name="Ruf C.S."/>
            <person name="Schneider D."/>
            <person name="Tourret J."/>
            <person name="Vacherie B."/>
            <person name="Vallenet D."/>
            <person name="Medigue C."/>
            <person name="Rocha E.P.C."/>
            <person name="Denamur E."/>
        </authorList>
    </citation>
    <scope>NUCLEOTIDE SEQUENCE [LARGE SCALE GENOMIC DNA]</scope>
    <source>
        <strain>S88 / ExPEC</strain>
    </source>
</reference>
<accession>B7MAZ5</accession>
<name>PLSY_ECO45</name>
<dbReference type="EC" id="2.3.1.15" evidence="1"/>
<dbReference type="EC" id="2.3.1.n5" evidence="1"/>
<dbReference type="EMBL" id="CU928161">
    <property type="protein sequence ID" value="CAR04686.1"/>
    <property type="molecule type" value="Genomic_DNA"/>
</dbReference>
<dbReference type="RefSeq" id="WP_001272796.1">
    <property type="nucleotide sequence ID" value="NC_011742.1"/>
</dbReference>
<dbReference type="SMR" id="B7MAZ5"/>
<dbReference type="GeneID" id="93778934"/>
<dbReference type="KEGG" id="ecz:ECS88_3457"/>
<dbReference type="HOGENOM" id="CLU_081254_0_2_6"/>
<dbReference type="UniPathway" id="UPA00085"/>
<dbReference type="Proteomes" id="UP000000747">
    <property type="component" value="Chromosome"/>
</dbReference>
<dbReference type="GO" id="GO:0005886">
    <property type="term" value="C:plasma membrane"/>
    <property type="evidence" value="ECO:0007669"/>
    <property type="project" value="UniProtKB-SubCell"/>
</dbReference>
<dbReference type="GO" id="GO:0043772">
    <property type="term" value="F:acyl-phosphate glycerol-3-phosphate acyltransferase activity"/>
    <property type="evidence" value="ECO:0007669"/>
    <property type="project" value="InterPro"/>
</dbReference>
<dbReference type="GO" id="GO:0004366">
    <property type="term" value="F:glycerol-3-phosphate O-acyltransferase activity"/>
    <property type="evidence" value="ECO:0007669"/>
    <property type="project" value="UniProtKB-UniRule"/>
</dbReference>
<dbReference type="GO" id="GO:0008654">
    <property type="term" value="P:phospholipid biosynthetic process"/>
    <property type="evidence" value="ECO:0007669"/>
    <property type="project" value="UniProtKB-UniRule"/>
</dbReference>
<dbReference type="HAMAP" id="MF_01043">
    <property type="entry name" value="PlsY"/>
    <property type="match status" value="1"/>
</dbReference>
<dbReference type="InterPro" id="IPR003811">
    <property type="entry name" value="G3P_acylTferase_PlsY"/>
</dbReference>
<dbReference type="NCBIfam" id="TIGR00023">
    <property type="entry name" value="glycerol-3-phosphate 1-O-acyltransferase PlsY"/>
    <property type="match status" value="1"/>
</dbReference>
<dbReference type="PANTHER" id="PTHR30309:SF0">
    <property type="entry name" value="GLYCEROL-3-PHOSPHATE ACYLTRANSFERASE-RELATED"/>
    <property type="match status" value="1"/>
</dbReference>
<dbReference type="PANTHER" id="PTHR30309">
    <property type="entry name" value="INNER MEMBRANE PROTEIN YGIH"/>
    <property type="match status" value="1"/>
</dbReference>
<dbReference type="Pfam" id="PF02660">
    <property type="entry name" value="G3P_acyltransf"/>
    <property type="match status" value="1"/>
</dbReference>
<dbReference type="SMART" id="SM01207">
    <property type="entry name" value="G3P_acyltransf"/>
    <property type="match status" value="1"/>
</dbReference>
<gene>
    <name evidence="1" type="primary">plsY</name>
    <name type="synonym">ygiH</name>
    <name type="ordered locus">ECS88_3457</name>
</gene>
<sequence length="205" mass="22193">MSAIAPGMILIAYLCGSISSAILVCRLCGLPDPRTSGSGNPGATNVLRIGGKGAAVAVLIFDVLKGMLPVWGAYELGVSPFWLGLIAIAACLGHIWPVFFGFKGGKGVATAFGAIAPIGWDLTGVMAGTWLLTVLLSGYSSLGAIVSALIAPFYVWWFKPQFTFPVSMLSCLILLRHHDNIQRLWRRQETKIWTKFKRKREKDPE</sequence>
<keyword id="KW-0997">Cell inner membrane</keyword>
<keyword id="KW-1003">Cell membrane</keyword>
<keyword id="KW-0444">Lipid biosynthesis</keyword>
<keyword id="KW-0443">Lipid metabolism</keyword>
<keyword id="KW-0472">Membrane</keyword>
<keyword id="KW-0594">Phospholipid biosynthesis</keyword>
<keyword id="KW-1208">Phospholipid metabolism</keyword>
<keyword id="KW-1185">Reference proteome</keyword>
<keyword id="KW-0808">Transferase</keyword>
<keyword id="KW-0812">Transmembrane</keyword>
<keyword id="KW-1133">Transmembrane helix</keyword>
<feature type="chain" id="PRO_1000136081" description="Glycerol-3-phosphate acyltransferase">
    <location>
        <begin position="1"/>
        <end position="205"/>
    </location>
</feature>
<feature type="topological domain" description="Periplasmic" evidence="1">
    <location>
        <begin position="1"/>
        <end position="3"/>
    </location>
</feature>
<feature type="transmembrane region" description="Helical" evidence="1">
    <location>
        <begin position="4"/>
        <end position="24"/>
    </location>
</feature>
<feature type="topological domain" description="Cytoplasmic" evidence="1">
    <location>
        <begin position="25"/>
        <end position="52"/>
    </location>
</feature>
<feature type="transmembrane region" description="Helical" evidence="1">
    <location>
        <begin position="53"/>
        <end position="73"/>
    </location>
</feature>
<feature type="topological domain" description="Periplasmic" evidence="1">
    <location>
        <begin position="74"/>
        <end position="80"/>
    </location>
</feature>
<feature type="transmembrane region" description="Helical" evidence="1">
    <location>
        <begin position="81"/>
        <end position="101"/>
    </location>
</feature>
<feature type="topological domain" description="Cytoplasmic" evidence="1">
    <location>
        <begin position="102"/>
        <end position="111"/>
    </location>
</feature>
<feature type="transmembrane region" description="Helical" evidence="1">
    <location>
        <begin position="112"/>
        <end position="132"/>
    </location>
</feature>
<feature type="topological domain" description="Periplasmic" evidence="1">
    <location>
        <begin position="133"/>
        <end position="137"/>
    </location>
</feature>
<feature type="transmembrane region" description="Helical" evidence="1">
    <location>
        <begin position="138"/>
        <end position="158"/>
    </location>
</feature>
<feature type="topological domain" description="Cytoplasmic" evidence="1">
    <location>
        <begin position="159"/>
        <end position="205"/>
    </location>
</feature>
<evidence type="ECO:0000255" key="1">
    <source>
        <dbReference type="HAMAP-Rule" id="MF_01043"/>
    </source>
</evidence>